<organismHost>
    <name type="scientific">Mycobacterium</name>
    <dbReference type="NCBI Taxonomy" id="1763"/>
</organismHost>
<organism>
    <name type="scientific">Mycobacterium phage L5</name>
    <name type="common">Mycobacteriophage L5</name>
    <dbReference type="NCBI Taxonomy" id="31757"/>
    <lineage>
        <taxon>Viruses</taxon>
        <taxon>Duplodnaviria</taxon>
        <taxon>Heunggongvirae</taxon>
        <taxon>Uroviricota</taxon>
        <taxon>Caudoviricetes</taxon>
        <taxon>Fromanvirus</taxon>
    </lineage>
</organism>
<accession>Q05296</accession>
<reference key="1">
    <citation type="journal article" date="1993" name="Mol. Microbiol.">
        <title>DNA sequence, structure and gene expression of mycobacteriophage L5: a phage system for mycobacterial genetics.</title>
        <authorList>
            <person name="Hatfull G.F."/>
            <person name="Sarkis G.J."/>
        </authorList>
    </citation>
    <scope>NUCLEOTIDE SEQUENCE [LARGE SCALE GENOMIC DNA]</scope>
</reference>
<protein>
    <recommendedName>
        <fullName evidence="2">Holin</fullName>
    </recommendedName>
    <alternativeName>
        <fullName evidence="3">Gene product 11</fullName>
        <shortName evidence="3">gp11</shortName>
    </alternativeName>
</protein>
<proteinExistence type="inferred from homology"/>
<comment type="function">
    <text evidence="2">Accumulates harmlessly in the cytoplasmic membrane until it reaches a critical concentration that triggers the formation of micron-scale pores (holes) causing host cell membrane disruption and endolysin escape into the periplasmic space. Determines the precise timing of host cell lysis. Participates with the endolysin protein in the sequential events which lead to the programmed host cell lysis releasing the mature viral particles from the host cell.</text>
</comment>
<comment type="subunit">
    <text evidence="2">Homomultimer. Self-associates to form a pore.</text>
</comment>
<comment type="subcellular location">
    <subcellularLocation>
        <location evidence="2">Host cell inner membrane</location>
        <topology evidence="2">Multi-pass membrane protein</topology>
    </subcellularLocation>
</comment>
<comment type="domain">
    <text evidence="2">The first transmembrane region undergoes a helix to beta-hairpin conformational change, which is responsible for its self-association and pore formation in the host membrane. The coiled coil region is required for host cell lysis and for cytotoxic activity. The C-terminus determines the size of the hole.</text>
</comment>
<comment type="similarity">
    <text evidence="2">Belongs to the Mycobacterium phage D29 holin family.</text>
</comment>
<keyword id="KW-0175">Coiled coil</keyword>
<keyword id="KW-0204">Cytolysis</keyword>
<keyword id="KW-1030">Host cell inner membrane</keyword>
<keyword id="KW-0578">Host cell lysis by virus</keyword>
<keyword id="KW-1032">Host cell membrane</keyword>
<keyword id="KW-1043">Host membrane</keyword>
<keyword id="KW-0472">Membrane</keyword>
<keyword id="KW-1185">Reference proteome</keyword>
<keyword id="KW-0812">Transmembrane</keyword>
<keyword id="KW-1133">Transmembrane helix</keyword>
<keyword id="KW-1188">Viral release from host cell</keyword>
<feature type="chain" id="PRO_0000164711" description="Holin">
    <location>
        <begin position="1"/>
        <end position="131"/>
    </location>
</feature>
<feature type="transmembrane region" description="Helical" evidence="2">
    <location>
        <begin position="9"/>
        <end position="29"/>
    </location>
</feature>
<feature type="transmembrane region" description="Helical" evidence="2">
    <location>
        <begin position="40"/>
        <end position="60"/>
    </location>
</feature>
<feature type="coiled-coil region" evidence="1">
    <location>
        <begin position="74"/>
        <end position="104"/>
    </location>
</feature>
<evidence type="ECO:0000255" key="1"/>
<evidence type="ECO:0000255" key="2">
    <source>
        <dbReference type="HAMAP-Rule" id="MF_04168"/>
    </source>
</evidence>
<evidence type="ECO:0000305" key="3"/>
<sequence>MSPKIRQTIYLLGTAAPALLGIVLIWGGLDAESAADLGDIIAGVVSILVSGAPAVAAGTVRSQRKDGTLSTSPVDQVTKGVEQVLAARQSAEAEVAKVKQALETAVSGSLPQLGPLATQILNVADDTVWRP</sequence>
<dbReference type="EMBL" id="Z18946">
    <property type="protein sequence ID" value="CAA79387.1"/>
    <property type="molecule type" value="Genomic_DNA"/>
</dbReference>
<dbReference type="PIR" id="S30956">
    <property type="entry name" value="S30956"/>
</dbReference>
<dbReference type="RefSeq" id="NP_039675.1">
    <property type="nucleotide sequence ID" value="NC_001335.1"/>
</dbReference>
<dbReference type="SMR" id="Q05296"/>
<dbReference type="GeneID" id="2942970"/>
<dbReference type="KEGG" id="vg:2942970"/>
<dbReference type="OrthoDB" id="17713at10239"/>
<dbReference type="Proteomes" id="UP000002123">
    <property type="component" value="Genome"/>
</dbReference>
<dbReference type="GO" id="GO:0020002">
    <property type="term" value="C:host cell plasma membrane"/>
    <property type="evidence" value="ECO:0007669"/>
    <property type="project" value="UniProtKB-SubCell"/>
</dbReference>
<dbReference type="GO" id="GO:0016020">
    <property type="term" value="C:membrane"/>
    <property type="evidence" value="ECO:0007669"/>
    <property type="project" value="UniProtKB-UniRule"/>
</dbReference>
<dbReference type="GO" id="GO:0140911">
    <property type="term" value="F:pore-forming activity"/>
    <property type="evidence" value="ECO:0007669"/>
    <property type="project" value="UniProtKB-UniRule"/>
</dbReference>
<dbReference type="GO" id="GO:0031640">
    <property type="term" value="P:killing of cells of another organism"/>
    <property type="evidence" value="ECO:0007669"/>
    <property type="project" value="UniProtKB-KW"/>
</dbReference>
<dbReference type="HAMAP" id="MF_04168">
    <property type="entry name" value="HOLIN_D29"/>
    <property type="match status" value="1"/>
</dbReference>
<dbReference type="InterPro" id="IPR032121">
    <property type="entry name" value="Myco_phage_holin"/>
</dbReference>
<dbReference type="Pfam" id="PF16081">
    <property type="entry name" value="Phage_holin_7_1"/>
    <property type="match status" value="1"/>
</dbReference>
<name>HOLIN_BPML5</name>
<gene>
    <name type="primary">11</name>
</gene>